<gene>
    <name evidence="1" type="primary">pafA</name>
    <name type="ordered locus">cgR_1554</name>
</gene>
<accession>A4QE80</accession>
<proteinExistence type="inferred from homology"/>
<dbReference type="EC" id="6.3.1.19" evidence="1"/>
<dbReference type="EMBL" id="AP009044">
    <property type="protein sequence ID" value="BAF54546.1"/>
    <property type="molecule type" value="Genomic_DNA"/>
</dbReference>
<dbReference type="SMR" id="A4QE80"/>
<dbReference type="KEGG" id="cgt:cgR_1554"/>
<dbReference type="HOGENOM" id="CLU_040524_0_1_11"/>
<dbReference type="PhylomeDB" id="A4QE80"/>
<dbReference type="UniPathway" id="UPA00997"/>
<dbReference type="UniPathway" id="UPA00998"/>
<dbReference type="Proteomes" id="UP000006698">
    <property type="component" value="Chromosome"/>
</dbReference>
<dbReference type="GO" id="GO:0005524">
    <property type="term" value="F:ATP binding"/>
    <property type="evidence" value="ECO:0007669"/>
    <property type="project" value="UniProtKB-UniRule"/>
</dbReference>
<dbReference type="GO" id="GO:0016879">
    <property type="term" value="F:ligase activity, forming carbon-nitrogen bonds"/>
    <property type="evidence" value="ECO:0007669"/>
    <property type="project" value="InterPro"/>
</dbReference>
<dbReference type="GO" id="GO:0000287">
    <property type="term" value="F:magnesium ion binding"/>
    <property type="evidence" value="ECO:0007669"/>
    <property type="project" value="UniProtKB-UniRule"/>
</dbReference>
<dbReference type="GO" id="GO:0019787">
    <property type="term" value="F:ubiquitin-like protein transferase activity"/>
    <property type="evidence" value="ECO:0007669"/>
    <property type="project" value="UniProtKB-UniRule"/>
</dbReference>
<dbReference type="GO" id="GO:0019941">
    <property type="term" value="P:modification-dependent protein catabolic process"/>
    <property type="evidence" value="ECO:0007669"/>
    <property type="project" value="UniProtKB-UniRule"/>
</dbReference>
<dbReference type="GO" id="GO:0010498">
    <property type="term" value="P:proteasomal protein catabolic process"/>
    <property type="evidence" value="ECO:0007669"/>
    <property type="project" value="UniProtKB-UniRule"/>
</dbReference>
<dbReference type="GO" id="GO:0070490">
    <property type="term" value="P:protein pupylation"/>
    <property type="evidence" value="ECO:0007669"/>
    <property type="project" value="UniProtKB-UniRule"/>
</dbReference>
<dbReference type="HAMAP" id="MF_02111">
    <property type="entry name" value="Pup_ligase"/>
    <property type="match status" value="1"/>
</dbReference>
<dbReference type="InterPro" id="IPR022279">
    <property type="entry name" value="Pup_ligase"/>
</dbReference>
<dbReference type="InterPro" id="IPR004347">
    <property type="entry name" value="Pup_ligase/deamidase"/>
</dbReference>
<dbReference type="NCBIfam" id="TIGR03686">
    <property type="entry name" value="pupylate_PafA"/>
    <property type="match status" value="1"/>
</dbReference>
<dbReference type="PANTHER" id="PTHR42307">
    <property type="entry name" value="PUP DEAMIDASE/DEPUPYLASE"/>
    <property type="match status" value="1"/>
</dbReference>
<dbReference type="PANTHER" id="PTHR42307:SF3">
    <property type="entry name" value="PUP--PROTEIN LIGASE"/>
    <property type="match status" value="1"/>
</dbReference>
<dbReference type="Pfam" id="PF03136">
    <property type="entry name" value="Pup_ligase"/>
    <property type="match status" value="1"/>
</dbReference>
<dbReference type="PIRSF" id="PIRSF018077">
    <property type="entry name" value="UCP018077"/>
    <property type="match status" value="1"/>
</dbReference>
<reference key="1">
    <citation type="journal article" date="2007" name="Microbiology">
        <title>Comparative analysis of the Corynebacterium glutamicum group and complete genome sequence of strain R.</title>
        <authorList>
            <person name="Yukawa H."/>
            <person name="Omumasaba C.A."/>
            <person name="Nonaka H."/>
            <person name="Kos P."/>
            <person name="Okai N."/>
            <person name="Suzuki N."/>
            <person name="Suda M."/>
            <person name="Tsuge Y."/>
            <person name="Watanabe J."/>
            <person name="Ikeda Y."/>
            <person name="Vertes A.A."/>
            <person name="Inui M."/>
        </authorList>
    </citation>
    <scope>NUCLEOTIDE SEQUENCE [LARGE SCALE GENOMIC DNA]</scope>
    <source>
        <strain>R</strain>
    </source>
</reference>
<organism>
    <name type="scientific">Corynebacterium glutamicum (strain R)</name>
    <dbReference type="NCBI Taxonomy" id="340322"/>
    <lineage>
        <taxon>Bacteria</taxon>
        <taxon>Bacillati</taxon>
        <taxon>Actinomycetota</taxon>
        <taxon>Actinomycetes</taxon>
        <taxon>Mycobacteriales</taxon>
        <taxon>Corynebacteriaceae</taxon>
        <taxon>Corynebacterium</taxon>
    </lineage>
</organism>
<keyword id="KW-0067">ATP-binding</keyword>
<keyword id="KW-0436">Ligase</keyword>
<keyword id="KW-0460">Magnesium</keyword>
<keyword id="KW-0479">Metal-binding</keyword>
<keyword id="KW-0547">Nucleotide-binding</keyword>
<keyword id="KW-0833">Ubl conjugation pathway</keyword>
<sequence>MSTVESALTRRIMGIETEYGLTFVDGDSKKLRPDEIARRMFRPIVEKYSSSNIFIPNGSRLYLDVGSHPEYATAECDNLTQLINFEKAGDVIADRMAVDAEESLAKEDIAGQVYLFKNNVDSVGNSYGCHENYLVGRSMPLKALGKRLMPFLITRQLICGAGRIHHPNPLDKGESFPLGYCISQRSDHVWEGVSSATTRSRPIINTRDEPHADSHSYRRLHVIVGDANMAEPSIALKVGSTLLVLEMIEADFGLPSLELANDIASIREISRDATGSTLLSLKDGTTMTALQIQQVVFEHASKWLEQRPEPEFSGTSNTEMARVLDLWGRMLKAIESGDFSEVDTEIDWVIKKKLIDRFIQRGNLGLDDPKLAQVDLTYHDIRPGRGLFSVLQSRGMIKRWTTDEAILAAVDTAPDTTRAHLRGRILKAADTLGVPVTVDWMRHKVNRPEPQSVELGDPFSAVNSEVDQLIEYMTVHAESYRS</sequence>
<evidence type="ECO:0000255" key="1">
    <source>
        <dbReference type="HAMAP-Rule" id="MF_02111"/>
    </source>
</evidence>
<comment type="function">
    <text evidence="1">Catalyzes the covalent attachment of the prokaryotic ubiquitin-like protein modifier Pup to the proteasomal substrate proteins, thereby targeting them for proteasomal degradation. This tagging system is termed pupylation. The ligation reaction involves the side-chain carboxylate of the C-terminal glutamate of Pup and the side-chain amino group of a substrate lysine.</text>
</comment>
<comment type="catalytic activity">
    <reaction evidence="1">
        <text>ATP + [prokaryotic ubiquitin-like protein]-L-glutamate + [protein]-L-lysine = ADP + phosphate + N(6)-([prokaryotic ubiquitin-like protein]-gamma-L-glutamyl)-[protein]-L-lysine.</text>
        <dbReference type="EC" id="6.3.1.19"/>
    </reaction>
</comment>
<comment type="pathway">
    <text evidence="1">Protein degradation; proteasomal Pup-dependent pathway.</text>
</comment>
<comment type="pathway">
    <text evidence="1">Protein modification; protein pupylation.</text>
</comment>
<comment type="miscellaneous">
    <text evidence="1">The reaction mechanism probably proceeds via the activation of Pup by phosphorylation of its C-terminal glutamate, which is then subject to nucleophilic attack by the substrate lysine, resulting in an isopeptide bond and the release of phosphate as a good leaving group.</text>
</comment>
<comment type="similarity">
    <text evidence="1">Belongs to the Pup ligase/Pup deamidase family. Pup-conjugating enzyme subfamily.</text>
</comment>
<name>PAFA_CORGB</name>
<protein>
    <recommendedName>
        <fullName evidence="1">Pup--protein ligase</fullName>
        <ecNumber evidence="1">6.3.1.19</ecNumber>
    </recommendedName>
    <alternativeName>
        <fullName evidence="1">Proteasome accessory factor A</fullName>
    </alternativeName>
    <alternativeName>
        <fullName evidence="1">Pup-conjugating enzyme</fullName>
    </alternativeName>
</protein>
<feature type="chain" id="PRO_0000395909" description="Pup--protein ligase">
    <location>
        <begin position="1"/>
        <end position="482"/>
    </location>
</feature>
<feature type="active site" description="Proton acceptor" evidence="1">
    <location>
        <position position="64"/>
    </location>
</feature>
<feature type="binding site" evidence="1">
    <location>
        <position position="16"/>
    </location>
    <ligand>
        <name>Mg(2+)</name>
        <dbReference type="ChEBI" id="CHEBI:18420"/>
    </ligand>
</feature>
<feature type="binding site" evidence="1">
    <location>
        <position position="60"/>
    </location>
    <ligand>
        <name>ATP</name>
        <dbReference type="ChEBI" id="CHEBI:30616"/>
    </ligand>
</feature>
<feature type="binding site" evidence="1">
    <location>
        <position position="62"/>
    </location>
    <ligand>
        <name>Mg(2+)</name>
        <dbReference type="ChEBI" id="CHEBI:18420"/>
    </ligand>
</feature>
<feature type="binding site" evidence="1">
    <location>
        <position position="70"/>
    </location>
    <ligand>
        <name>Mg(2+)</name>
        <dbReference type="ChEBI" id="CHEBI:18420"/>
    </ligand>
</feature>
<feature type="binding site" evidence="1">
    <location>
        <position position="73"/>
    </location>
    <ligand>
        <name>ATP</name>
        <dbReference type="ChEBI" id="CHEBI:30616"/>
    </ligand>
</feature>
<feature type="binding site" evidence="1">
    <location>
        <position position="440"/>
    </location>
    <ligand>
        <name>ATP</name>
        <dbReference type="ChEBI" id="CHEBI:30616"/>
    </ligand>
</feature>